<sequence length="483" mass="55461">MLTLDTLNTMLAVSEEGMVEEMILALLASPQLVIFFEKFPRLKNAVTADLPRWREALRSRLKDARVPPELTEEVMCYQQSQLLSTPQFIVQLPQILALLHRLHSPYAAQAKQLTESNSTFTPALHTLFLQRWRLSLVVQATTLNQQLLEEEREQLLSDVQERMTLSGQLEPTLAENDNAAGRLWDMSAGQLKRGDYQLIVKYGEFLAAQPELMQLAEQLGRSREAKSVPKKDAPMETFRTLVREPATVPEQVDGIQQGDDILRLLPPELATLGITELEYEFYRRLVEKQLLTYRLHGEAWREKVTERPVVHQDVDEQPRGPFIVCVDTSGSMGGFNEQCAKAFCLALMRVALADNRRCFIMLFSTDVVRYELSGPESIEQAIRFLSQRFRGGTDIASCFRAIIERMQGREWFDADAVVISDFIAQRLPDDVVSKVGELQRLHQHRFHAVAMSAHGKPGIMRIFDHIWRFDTGMRSRLLRRWRR</sequence>
<protein>
    <recommendedName>
        <fullName evidence="1">Regulatory protein ViaA</fullName>
    </recommendedName>
    <alternativeName>
        <fullName evidence="1">VWA interacting with AAA+ ATPase</fullName>
    </alternativeName>
</protein>
<evidence type="ECO:0000255" key="1">
    <source>
        <dbReference type="HAMAP-Rule" id="MF_01626"/>
    </source>
</evidence>
<feature type="chain" id="PRO_0000196589" description="Regulatory protein ViaA">
    <location>
        <begin position="1"/>
        <end position="483"/>
    </location>
</feature>
<organism>
    <name type="scientific">Salmonella typhi</name>
    <dbReference type="NCBI Taxonomy" id="90370"/>
    <lineage>
        <taxon>Bacteria</taxon>
        <taxon>Pseudomonadati</taxon>
        <taxon>Pseudomonadota</taxon>
        <taxon>Gammaproteobacteria</taxon>
        <taxon>Enterobacterales</taxon>
        <taxon>Enterobacteriaceae</taxon>
        <taxon>Salmonella</taxon>
    </lineage>
</organism>
<reference key="1">
    <citation type="journal article" date="2001" name="Nature">
        <title>Complete genome sequence of a multiple drug resistant Salmonella enterica serovar Typhi CT18.</title>
        <authorList>
            <person name="Parkhill J."/>
            <person name="Dougan G."/>
            <person name="James K.D."/>
            <person name="Thomson N.R."/>
            <person name="Pickard D."/>
            <person name="Wain J."/>
            <person name="Churcher C.M."/>
            <person name="Mungall K.L."/>
            <person name="Bentley S.D."/>
            <person name="Holden M.T.G."/>
            <person name="Sebaihia M."/>
            <person name="Baker S."/>
            <person name="Basham D."/>
            <person name="Brooks K."/>
            <person name="Chillingworth T."/>
            <person name="Connerton P."/>
            <person name="Cronin A."/>
            <person name="Davis P."/>
            <person name="Davies R.M."/>
            <person name="Dowd L."/>
            <person name="White N."/>
            <person name="Farrar J."/>
            <person name="Feltwell T."/>
            <person name="Hamlin N."/>
            <person name="Haque A."/>
            <person name="Hien T.T."/>
            <person name="Holroyd S."/>
            <person name="Jagels K."/>
            <person name="Krogh A."/>
            <person name="Larsen T.S."/>
            <person name="Leather S."/>
            <person name="Moule S."/>
            <person name="O'Gaora P."/>
            <person name="Parry C."/>
            <person name="Quail M.A."/>
            <person name="Rutherford K.M."/>
            <person name="Simmonds M."/>
            <person name="Skelton J."/>
            <person name="Stevens K."/>
            <person name="Whitehead S."/>
            <person name="Barrell B.G."/>
        </authorList>
    </citation>
    <scope>NUCLEOTIDE SEQUENCE [LARGE SCALE GENOMIC DNA]</scope>
    <source>
        <strain>CT18</strain>
    </source>
</reference>
<reference key="2">
    <citation type="journal article" date="2003" name="J. Bacteriol.">
        <title>Comparative genomics of Salmonella enterica serovar Typhi strains Ty2 and CT18.</title>
        <authorList>
            <person name="Deng W."/>
            <person name="Liou S.-R."/>
            <person name="Plunkett G. III"/>
            <person name="Mayhew G.F."/>
            <person name="Rose D.J."/>
            <person name="Burland V."/>
            <person name="Kodoyianni V."/>
            <person name="Schwartz D.C."/>
            <person name="Blattner F.R."/>
        </authorList>
    </citation>
    <scope>NUCLEOTIDE SEQUENCE [LARGE SCALE GENOMIC DNA]</scope>
    <source>
        <strain>ATCC 700931 / Ty2</strain>
    </source>
</reference>
<gene>
    <name evidence="1" type="primary">viaA</name>
    <name type="ordered locus">STY3900</name>
    <name type="ordered locus">t3641</name>
</gene>
<dbReference type="EMBL" id="AL513382">
    <property type="protein sequence ID" value="CAD03117.1"/>
    <property type="molecule type" value="Genomic_DNA"/>
</dbReference>
<dbReference type="EMBL" id="AE014613">
    <property type="protein sequence ID" value="AAO71138.1"/>
    <property type="molecule type" value="Genomic_DNA"/>
</dbReference>
<dbReference type="RefSeq" id="NP_458065.1">
    <property type="nucleotide sequence ID" value="NC_003198.1"/>
</dbReference>
<dbReference type="RefSeq" id="WP_000956591.1">
    <property type="nucleotide sequence ID" value="NZ_WSUR01000023.1"/>
</dbReference>
<dbReference type="SMR" id="Q8Z2R0"/>
<dbReference type="STRING" id="220341.gene:17587760"/>
<dbReference type="KEGG" id="stt:t3641"/>
<dbReference type="KEGG" id="sty:STY3900"/>
<dbReference type="PATRIC" id="fig|220341.7.peg.3980"/>
<dbReference type="eggNOG" id="COG2425">
    <property type="taxonomic scope" value="Bacteria"/>
</dbReference>
<dbReference type="HOGENOM" id="CLU_022130_0_0_6"/>
<dbReference type="OMA" id="CDQWYQS"/>
<dbReference type="OrthoDB" id="387240at2"/>
<dbReference type="Proteomes" id="UP000000541">
    <property type="component" value="Chromosome"/>
</dbReference>
<dbReference type="Proteomes" id="UP000002670">
    <property type="component" value="Chromosome"/>
</dbReference>
<dbReference type="GO" id="GO:0005829">
    <property type="term" value="C:cytosol"/>
    <property type="evidence" value="ECO:0007669"/>
    <property type="project" value="TreeGrafter"/>
</dbReference>
<dbReference type="CDD" id="cd01462">
    <property type="entry name" value="VWA_YIEM_type"/>
    <property type="match status" value="1"/>
</dbReference>
<dbReference type="Gene3D" id="3.40.50.410">
    <property type="entry name" value="von Willebrand factor, type A domain"/>
    <property type="match status" value="1"/>
</dbReference>
<dbReference type="HAMAP" id="MF_01626">
    <property type="entry name" value="ViaA"/>
    <property type="match status" value="1"/>
</dbReference>
<dbReference type="InterPro" id="IPR008912">
    <property type="entry name" value="Uncharacterised_CoxE"/>
</dbReference>
<dbReference type="InterPro" id="IPR023481">
    <property type="entry name" value="Uncharacterised_ViaA"/>
</dbReference>
<dbReference type="InterPro" id="IPR002035">
    <property type="entry name" value="VWF_A"/>
</dbReference>
<dbReference type="InterPro" id="IPR036465">
    <property type="entry name" value="vWFA_dom_sf"/>
</dbReference>
<dbReference type="NCBIfam" id="NF008230">
    <property type="entry name" value="PRK10997.1"/>
    <property type="match status" value="1"/>
</dbReference>
<dbReference type="PANTHER" id="PTHR36846">
    <property type="entry name" value="PROTEIN VIAA"/>
    <property type="match status" value="1"/>
</dbReference>
<dbReference type="PANTHER" id="PTHR36846:SF1">
    <property type="entry name" value="PROTEIN VIAA"/>
    <property type="match status" value="1"/>
</dbReference>
<dbReference type="Pfam" id="PF05762">
    <property type="entry name" value="VWA_CoxE"/>
    <property type="match status" value="1"/>
</dbReference>
<dbReference type="SMART" id="SM00327">
    <property type="entry name" value="VWA"/>
    <property type="match status" value="1"/>
</dbReference>
<dbReference type="SUPFAM" id="SSF53300">
    <property type="entry name" value="vWA-like"/>
    <property type="match status" value="1"/>
</dbReference>
<name>VIAA_SALTI</name>
<comment type="function">
    <text evidence="1">Component of the RavA-ViaA chaperone complex, which may act on the membrane to optimize the function of some of the respiratory chains. ViaA stimulates the ATPase activity of RavA.</text>
</comment>
<comment type="subunit">
    <text evidence="1">Homodimer. Interacts with RavA.</text>
</comment>
<comment type="subcellular location">
    <subcellularLocation>
        <location evidence="1">Cytoplasm</location>
    </subcellularLocation>
</comment>
<comment type="similarity">
    <text evidence="1">Belongs to the ViaA family.</text>
</comment>
<keyword id="KW-0143">Chaperone</keyword>
<keyword id="KW-0963">Cytoplasm</keyword>
<proteinExistence type="inferred from homology"/>
<accession>Q8Z2R0</accession>
<accession>Q7C6J1</accession>